<evidence type="ECO:0000255" key="1">
    <source>
        <dbReference type="HAMAP-Rule" id="MF_01850"/>
    </source>
</evidence>
<accession>Q21IJ4</accession>
<sequence length="310" mass="34794">MTQDVRRSKLEFNKLQKRLRRNVGKAIADYNMIEDGDKVMVCLSGGKDSYAMLDILMGLQKAAPIKFDIVAVNMDQKQPGFPEHILPEYLDSLGIEYHIVERDTYSVVKSVIPEGKTTCGLCSRLRRGTLYGFAERIGATKIALGHHRDDIVETLFLNMFYGGRLKAMPPKLLADDKRNIIIRPLAYCVEADLEEFAKQKAFPIIPCNLCGSQENLQRQAIKQMLQGWEKQFPGRIETIFSSLQRVSASQLADTELYDFVGLTIDRSAEPKDYGEQSAINVFPPLDDSFAGNSLKGEQDPVKLIEAVNLG</sequence>
<comment type="function">
    <text evidence="1">Catalyzes the ATP-dependent 2-thiolation of cytidine in position 32 of tRNA, to form 2-thiocytidine (s(2)C32). The sulfur atoms are provided by the cysteine/cysteine desulfurase (IscS) system.</text>
</comment>
<comment type="catalytic activity">
    <reaction evidence="1">
        <text>cytidine(32) in tRNA + S-sulfanyl-L-cysteinyl-[cysteine desulfurase] + AH2 + ATP = 2-thiocytidine(32) in tRNA + L-cysteinyl-[cysteine desulfurase] + A + AMP + diphosphate + H(+)</text>
        <dbReference type="Rhea" id="RHEA:57048"/>
        <dbReference type="Rhea" id="RHEA-COMP:10288"/>
        <dbReference type="Rhea" id="RHEA-COMP:12157"/>
        <dbReference type="Rhea" id="RHEA-COMP:12158"/>
        <dbReference type="Rhea" id="RHEA-COMP:14821"/>
        <dbReference type="ChEBI" id="CHEBI:13193"/>
        <dbReference type="ChEBI" id="CHEBI:15378"/>
        <dbReference type="ChEBI" id="CHEBI:17499"/>
        <dbReference type="ChEBI" id="CHEBI:29950"/>
        <dbReference type="ChEBI" id="CHEBI:30616"/>
        <dbReference type="ChEBI" id="CHEBI:33019"/>
        <dbReference type="ChEBI" id="CHEBI:61963"/>
        <dbReference type="ChEBI" id="CHEBI:82748"/>
        <dbReference type="ChEBI" id="CHEBI:141453"/>
        <dbReference type="ChEBI" id="CHEBI:456215"/>
    </reaction>
    <physiologicalReaction direction="left-to-right" evidence="1">
        <dbReference type="Rhea" id="RHEA:57049"/>
    </physiologicalReaction>
</comment>
<comment type="cofactor">
    <cofactor evidence="1">
        <name>Mg(2+)</name>
        <dbReference type="ChEBI" id="CHEBI:18420"/>
    </cofactor>
</comment>
<comment type="cofactor">
    <cofactor evidence="1">
        <name>[4Fe-4S] cluster</name>
        <dbReference type="ChEBI" id="CHEBI:49883"/>
    </cofactor>
    <text evidence="1">Binds 1 [4Fe-4S] cluster per subunit. The cluster is chelated by three Cys residues, the fourth Fe has a free coordination site that may bind a sulfur atom transferred from the persulfide of IscS.</text>
</comment>
<comment type="pathway">
    <text evidence="1">tRNA modification.</text>
</comment>
<comment type="subunit">
    <text evidence="1">Homodimer.</text>
</comment>
<comment type="subcellular location">
    <subcellularLocation>
        <location evidence="1">Cytoplasm</location>
    </subcellularLocation>
</comment>
<comment type="miscellaneous">
    <text evidence="1">The thiolation reaction likely consists of two steps: a first activation step by ATP to form an adenylated intermediate of the target base of tRNA, and a second nucleophilic substitution step of the sulfur (S) atom supplied by the hydrosulfide attached to the Fe-S cluster.</text>
</comment>
<comment type="similarity">
    <text evidence="1">Belongs to the TtcA family.</text>
</comment>
<proteinExistence type="inferred from homology"/>
<protein>
    <recommendedName>
        <fullName evidence="1">tRNA-cytidine(32) 2-sulfurtransferase</fullName>
        <ecNumber evidence="1">2.8.1.-</ecNumber>
    </recommendedName>
    <alternativeName>
        <fullName evidence="1">Two-thiocytidine biosynthesis protein A</fullName>
    </alternativeName>
    <alternativeName>
        <fullName evidence="1">tRNA 2-thiocytidine biosynthesis protein TtcA</fullName>
    </alternativeName>
</protein>
<dbReference type="EC" id="2.8.1.-" evidence="1"/>
<dbReference type="EMBL" id="CP000282">
    <property type="protein sequence ID" value="ABD81485.1"/>
    <property type="molecule type" value="Genomic_DNA"/>
</dbReference>
<dbReference type="RefSeq" id="WP_011468703.1">
    <property type="nucleotide sequence ID" value="NC_007912.1"/>
</dbReference>
<dbReference type="SMR" id="Q21IJ4"/>
<dbReference type="STRING" id="203122.Sde_2225"/>
<dbReference type="GeneID" id="98613895"/>
<dbReference type="KEGG" id="sde:Sde_2225"/>
<dbReference type="eggNOG" id="COG0037">
    <property type="taxonomic scope" value="Bacteria"/>
</dbReference>
<dbReference type="HOGENOM" id="CLU_026481_0_0_6"/>
<dbReference type="OrthoDB" id="9801054at2"/>
<dbReference type="Proteomes" id="UP000001947">
    <property type="component" value="Chromosome"/>
</dbReference>
<dbReference type="GO" id="GO:0005737">
    <property type="term" value="C:cytoplasm"/>
    <property type="evidence" value="ECO:0007669"/>
    <property type="project" value="UniProtKB-SubCell"/>
</dbReference>
<dbReference type="GO" id="GO:0051539">
    <property type="term" value="F:4 iron, 4 sulfur cluster binding"/>
    <property type="evidence" value="ECO:0007669"/>
    <property type="project" value="UniProtKB-UniRule"/>
</dbReference>
<dbReference type="GO" id="GO:0005524">
    <property type="term" value="F:ATP binding"/>
    <property type="evidence" value="ECO:0007669"/>
    <property type="project" value="UniProtKB-UniRule"/>
</dbReference>
<dbReference type="GO" id="GO:0000287">
    <property type="term" value="F:magnesium ion binding"/>
    <property type="evidence" value="ECO:0007669"/>
    <property type="project" value="UniProtKB-UniRule"/>
</dbReference>
<dbReference type="GO" id="GO:0016783">
    <property type="term" value="F:sulfurtransferase activity"/>
    <property type="evidence" value="ECO:0007669"/>
    <property type="project" value="UniProtKB-UniRule"/>
</dbReference>
<dbReference type="GO" id="GO:0000049">
    <property type="term" value="F:tRNA binding"/>
    <property type="evidence" value="ECO:0007669"/>
    <property type="project" value="UniProtKB-KW"/>
</dbReference>
<dbReference type="GO" id="GO:0034227">
    <property type="term" value="P:tRNA thio-modification"/>
    <property type="evidence" value="ECO:0007669"/>
    <property type="project" value="UniProtKB-UniRule"/>
</dbReference>
<dbReference type="CDD" id="cd24138">
    <property type="entry name" value="TtcA-like"/>
    <property type="match status" value="1"/>
</dbReference>
<dbReference type="Gene3D" id="3.40.50.620">
    <property type="entry name" value="HUPs"/>
    <property type="match status" value="1"/>
</dbReference>
<dbReference type="HAMAP" id="MF_01850">
    <property type="entry name" value="TtcA"/>
    <property type="match status" value="1"/>
</dbReference>
<dbReference type="InterPro" id="IPR014729">
    <property type="entry name" value="Rossmann-like_a/b/a_fold"/>
</dbReference>
<dbReference type="InterPro" id="IPR011063">
    <property type="entry name" value="TilS/TtcA_N"/>
</dbReference>
<dbReference type="InterPro" id="IPR012089">
    <property type="entry name" value="tRNA_Cyd_32_2_STrfase"/>
</dbReference>
<dbReference type="InterPro" id="IPR035107">
    <property type="entry name" value="tRNA_thiolation_TtcA_Ctu1"/>
</dbReference>
<dbReference type="NCBIfam" id="NF007972">
    <property type="entry name" value="PRK10696.1"/>
    <property type="match status" value="1"/>
</dbReference>
<dbReference type="PANTHER" id="PTHR43686:SF1">
    <property type="entry name" value="AMINOTRAN_5 DOMAIN-CONTAINING PROTEIN"/>
    <property type="match status" value="1"/>
</dbReference>
<dbReference type="PANTHER" id="PTHR43686">
    <property type="entry name" value="SULFURTRANSFERASE-RELATED"/>
    <property type="match status" value="1"/>
</dbReference>
<dbReference type="Pfam" id="PF01171">
    <property type="entry name" value="ATP_bind_3"/>
    <property type="match status" value="1"/>
</dbReference>
<dbReference type="PIRSF" id="PIRSF004976">
    <property type="entry name" value="ATPase_YdaO"/>
    <property type="match status" value="1"/>
</dbReference>
<dbReference type="SUPFAM" id="SSF52402">
    <property type="entry name" value="Adenine nucleotide alpha hydrolases-like"/>
    <property type="match status" value="1"/>
</dbReference>
<name>TTCA_SACD2</name>
<feature type="chain" id="PRO_0000348823" description="tRNA-cytidine(32) 2-sulfurtransferase">
    <location>
        <begin position="1"/>
        <end position="310"/>
    </location>
</feature>
<feature type="short sequence motif" description="PP-loop motif" evidence="1">
    <location>
        <begin position="44"/>
        <end position="49"/>
    </location>
</feature>
<feature type="binding site" evidence="1">
    <location>
        <position position="119"/>
    </location>
    <ligand>
        <name>[4Fe-4S] cluster</name>
        <dbReference type="ChEBI" id="CHEBI:49883"/>
    </ligand>
</feature>
<feature type="binding site" evidence="1">
    <location>
        <position position="122"/>
    </location>
    <ligand>
        <name>[4Fe-4S] cluster</name>
        <dbReference type="ChEBI" id="CHEBI:49883"/>
    </ligand>
</feature>
<feature type="binding site" evidence="1">
    <location>
        <position position="210"/>
    </location>
    <ligand>
        <name>[4Fe-4S] cluster</name>
        <dbReference type="ChEBI" id="CHEBI:49883"/>
    </ligand>
</feature>
<gene>
    <name evidence="1" type="primary">ttcA</name>
    <name type="ordered locus">Sde_2225</name>
</gene>
<organism>
    <name type="scientific">Saccharophagus degradans (strain 2-40 / ATCC 43961 / DSM 17024)</name>
    <dbReference type="NCBI Taxonomy" id="203122"/>
    <lineage>
        <taxon>Bacteria</taxon>
        <taxon>Pseudomonadati</taxon>
        <taxon>Pseudomonadota</taxon>
        <taxon>Gammaproteobacteria</taxon>
        <taxon>Cellvibrionales</taxon>
        <taxon>Cellvibrionaceae</taxon>
        <taxon>Saccharophagus</taxon>
    </lineage>
</organism>
<keyword id="KW-0004">4Fe-4S</keyword>
<keyword id="KW-0067">ATP-binding</keyword>
<keyword id="KW-0963">Cytoplasm</keyword>
<keyword id="KW-0408">Iron</keyword>
<keyword id="KW-0411">Iron-sulfur</keyword>
<keyword id="KW-0460">Magnesium</keyword>
<keyword id="KW-0479">Metal-binding</keyword>
<keyword id="KW-0547">Nucleotide-binding</keyword>
<keyword id="KW-1185">Reference proteome</keyword>
<keyword id="KW-0694">RNA-binding</keyword>
<keyword id="KW-0808">Transferase</keyword>
<keyword id="KW-0819">tRNA processing</keyword>
<keyword id="KW-0820">tRNA-binding</keyword>
<reference key="1">
    <citation type="journal article" date="2008" name="PLoS Genet.">
        <title>Complete genome sequence of the complex carbohydrate-degrading marine bacterium, Saccharophagus degradans strain 2-40 T.</title>
        <authorList>
            <person name="Weiner R.M."/>
            <person name="Taylor L.E. II"/>
            <person name="Henrissat B."/>
            <person name="Hauser L."/>
            <person name="Land M."/>
            <person name="Coutinho P.M."/>
            <person name="Rancurel C."/>
            <person name="Saunders E.H."/>
            <person name="Longmire A.G."/>
            <person name="Zhang H."/>
            <person name="Bayer E.A."/>
            <person name="Gilbert H.J."/>
            <person name="Larimer F."/>
            <person name="Zhulin I.B."/>
            <person name="Ekborg N.A."/>
            <person name="Lamed R."/>
            <person name="Richardson P.M."/>
            <person name="Borovok I."/>
            <person name="Hutcheson S."/>
        </authorList>
    </citation>
    <scope>NUCLEOTIDE SEQUENCE [LARGE SCALE GENOMIC DNA]</scope>
    <source>
        <strain>2-40 / ATCC 43961 / DSM 17024</strain>
    </source>
</reference>